<sequence>MRLVQLSRHSIAFPSPEGALREPNGLLALGGDLSPARLLMAYQRGIFPWFSPGDPILWWSPDPRAVLWPESLHISRSMKRFHKRSPYRVTMNYAFGQVIEGCASDREEGTWITRGVVEAYHRLHELGHAHSIEVWREDELVGGMYGVAQGTLFCGESMFSRMENASKTALLVFCEEFIGHGGKLIDCQVLNDHTASLGACEIPRRDYLNYLNQMRLGRLPNNFWVPRCLFSPQE</sequence>
<evidence type="ECO:0000255" key="1">
    <source>
        <dbReference type="HAMAP-Rule" id="MF_00688"/>
    </source>
</evidence>
<organism>
    <name type="scientific">Escherichia coli (strain SE11)</name>
    <dbReference type="NCBI Taxonomy" id="409438"/>
    <lineage>
        <taxon>Bacteria</taxon>
        <taxon>Pseudomonadati</taxon>
        <taxon>Pseudomonadota</taxon>
        <taxon>Gammaproteobacteria</taxon>
        <taxon>Enterobacterales</taxon>
        <taxon>Enterobacteriaceae</taxon>
        <taxon>Escherichia</taxon>
    </lineage>
</organism>
<accession>B6I8V6</accession>
<proteinExistence type="inferred from homology"/>
<comment type="function">
    <text evidence="1">Functions in the N-end rule pathway of protein degradation where it conjugates Leu, Phe and, less efficiently, Met from aminoacyl-tRNAs to the N-termini of proteins containing an N-terminal arginine or lysine.</text>
</comment>
<comment type="catalytic activity">
    <reaction evidence="1">
        <text>N-terminal L-lysyl-[protein] + L-leucyl-tRNA(Leu) = N-terminal L-leucyl-L-lysyl-[protein] + tRNA(Leu) + H(+)</text>
        <dbReference type="Rhea" id="RHEA:12340"/>
        <dbReference type="Rhea" id="RHEA-COMP:9613"/>
        <dbReference type="Rhea" id="RHEA-COMP:9622"/>
        <dbReference type="Rhea" id="RHEA-COMP:12670"/>
        <dbReference type="Rhea" id="RHEA-COMP:12671"/>
        <dbReference type="ChEBI" id="CHEBI:15378"/>
        <dbReference type="ChEBI" id="CHEBI:65249"/>
        <dbReference type="ChEBI" id="CHEBI:78442"/>
        <dbReference type="ChEBI" id="CHEBI:78494"/>
        <dbReference type="ChEBI" id="CHEBI:133043"/>
        <dbReference type="EC" id="2.3.2.6"/>
    </reaction>
</comment>
<comment type="catalytic activity">
    <reaction evidence="1">
        <text>N-terminal L-arginyl-[protein] + L-leucyl-tRNA(Leu) = N-terminal L-leucyl-L-arginyl-[protein] + tRNA(Leu) + H(+)</text>
        <dbReference type="Rhea" id="RHEA:50416"/>
        <dbReference type="Rhea" id="RHEA-COMP:9613"/>
        <dbReference type="Rhea" id="RHEA-COMP:9622"/>
        <dbReference type="Rhea" id="RHEA-COMP:12672"/>
        <dbReference type="Rhea" id="RHEA-COMP:12673"/>
        <dbReference type="ChEBI" id="CHEBI:15378"/>
        <dbReference type="ChEBI" id="CHEBI:64719"/>
        <dbReference type="ChEBI" id="CHEBI:78442"/>
        <dbReference type="ChEBI" id="CHEBI:78494"/>
        <dbReference type="ChEBI" id="CHEBI:133044"/>
        <dbReference type="EC" id="2.3.2.6"/>
    </reaction>
</comment>
<comment type="catalytic activity">
    <reaction evidence="1">
        <text>L-phenylalanyl-tRNA(Phe) + an N-terminal L-alpha-aminoacyl-[protein] = an N-terminal L-phenylalanyl-L-alpha-aminoacyl-[protein] + tRNA(Phe)</text>
        <dbReference type="Rhea" id="RHEA:43632"/>
        <dbReference type="Rhea" id="RHEA-COMP:9668"/>
        <dbReference type="Rhea" id="RHEA-COMP:9699"/>
        <dbReference type="Rhea" id="RHEA-COMP:10636"/>
        <dbReference type="Rhea" id="RHEA-COMP:10637"/>
        <dbReference type="ChEBI" id="CHEBI:78442"/>
        <dbReference type="ChEBI" id="CHEBI:78531"/>
        <dbReference type="ChEBI" id="CHEBI:78597"/>
        <dbReference type="ChEBI" id="CHEBI:83561"/>
        <dbReference type="EC" id="2.3.2.6"/>
    </reaction>
</comment>
<comment type="subcellular location">
    <subcellularLocation>
        <location evidence="1">Cytoplasm</location>
    </subcellularLocation>
</comment>
<comment type="similarity">
    <text evidence="1">Belongs to the L/F-transferase family.</text>
</comment>
<protein>
    <recommendedName>
        <fullName evidence="1">Leucyl/phenylalanyl-tRNA--protein transferase</fullName>
        <ecNumber evidence="1">2.3.2.6</ecNumber>
    </recommendedName>
    <alternativeName>
        <fullName evidence="1">L/F-transferase</fullName>
    </alternativeName>
    <alternativeName>
        <fullName evidence="1">Leucyltransferase</fullName>
    </alternativeName>
    <alternativeName>
        <fullName evidence="1">Phenyalanyltransferase</fullName>
    </alternativeName>
</protein>
<feature type="chain" id="PRO_1000131924" description="Leucyl/phenylalanyl-tRNA--protein transferase">
    <location>
        <begin position="1"/>
        <end position="234"/>
    </location>
</feature>
<reference key="1">
    <citation type="journal article" date="2008" name="DNA Res.">
        <title>Complete genome sequence and comparative analysis of the wild-type commensal Escherichia coli strain SE11 isolated from a healthy adult.</title>
        <authorList>
            <person name="Oshima K."/>
            <person name="Toh H."/>
            <person name="Ogura Y."/>
            <person name="Sasamoto H."/>
            <person name="Morita H."/>
            <person name="Park S.-H."/>
            <person name="Ooka T."/>
            <person name="Iyoda S."/>
            <person name="Taylor T.D."/>
            <person name="Hayashi T."/>
            <person name="Itoh K."/>
            <person name="Hattori M."/>
        </authorList>
    </citation>
    <scope>NUCLEOTIDE SEQUENCE [LARGE SCALE GENOMIC DNA]</scope>
    <source>
        <strain>SE11</strain>
    </source>
</reference>
<keyword id="KW-0012">Acyltransferase</keyword>
<keyword id="KW-0963">Cytoplasm</keyword>
<keyword id="KW-0808">Transferase</keyword>
<gene>
    <name evidence="1" type="primary">aat</name>
    <name type="ordered locus">ECSE_0943</name>
</gene>
<dbReference type="EC" id="2.3.2.6" evidence="1"/>
<dbReference type="EMBL" id="AP009240">
    <property type="protein sequence ID" value="BAG76467.1"/>
    <property type="molecule type" value="Genomic_DNA"/>
</dbReference>
<dbReference type="RefSeq" id="WP_001241678.1">
    <property type="nucleotide sequence ID" value="NC_011415.1"/>
</dbReference>
<dbReference type="SMR" id="B6I8V6"/>
<dbReference type="GeneID" id="75206174"/>
<dbReference type="KEGG" id="ecy:ECSE_0943"/>
<dbReference type="HOGENOM" id="CLU_075045_0_0_6"/>
<dbReference type="Proteomes" id="UP000008199">
    <property type="component" value="Chromosome"/>
</dbReference>
<dbReference type="GO" id="GO:0005737">
    <property type="term" value="C:cytoplasm"/>
    <property type="evidence" value="ECO:0007669"/>
    <property type="project" value="UniProtKB-SubCell"/>
</dbReference>
<dbReference type="GO" id="GO:0008914">
    <property type="term" value="F:leucyl-tRNA--protein transferase activity"/>
    <property type="evidence" value="ECO:0007669"/>
    <property type="project" value="UniProtKB-UniRule"/>
</dbReference>
<dbReference type="GO" id="GO:0030163">
    <property type="term" value="P:protein catabolic process"/>
    <property type="evidence" value="ECO:0007669"/>
    <property type="project" value="UniProtKB-UniRule"/>
</dbReference>
<dbReference type="FunFam" id="3.30.70.3550:FF:000001">
    <property type="entry name" value="Leucyl/phenylalanyl-tRNA--protein transferase"/>
    <property type="match status" value="1"/>
</dbReference>
<dbReference type="FunFam" id="3.40.630.70:FF:000001">
    <property type="entry name" value="Leucyl/phenylalanyl-tRNA--protein transferase"/>
    <property type="match status" value="1"/>
</dbReference>
<dbReference type="Gene3D" id="3.40.630.70">
    <property type="entry name" value="Leucyl/phenylalanyl-tRNA-protein transferase, C-terminal domain"/>
    <property type="match status" value="1"/>
</dbReference>
<dbReference type="Gene3D" id="3.30.70.3550">
    <property type="entry name" value="Leucyl/phenylalanyl-tRNA-protein transferase, N-terminal domain"/>
    <property type="match status" value="1"/>
</dbReference>
<dbReference type="HAMAP" id="MF_00688">
    <property type="entry name" value="Leu_Phe_trans"/>
    <property type="match status" value="1"/>
</dbReference>
<dbReference type="InterPro" id="IPR016181">
    <property type="entry name" value="Acyl_CoA_acyltransferase"/>
</dbReference>
<dbReference type="InterPro" id="IPR004616">
    <property type="entry name" value="Leu/Phe-tRNA_Trfase"/>
</dbReference>
<dbReference type="InterPro" id="IPR042203">
    <property type="entry name" value="Leu/Phe-tRNA_Trfase_C"/>
</dbReference>
<dbReference type="InterPro" id="IPR042221">
    <property type="entry name" value="Leu/Phe-tRNA_Trfase_N"/>
</dbReference>
<dbReference type="NCBIfam" id="TIGR00667">
    <property type="entry name" value="aat"/>
    <property type="match status" value="1"/>
</dbReference>
<dbReference type="PANTHER" id="PTHR30098">
    <property type="entry name" value="LEUCYL/PHENYLALANYL-TRNA--PROTEIN TRANSFERASE"/>
    <property type="match status" value="1"/>
</dbReference>
<dbReference type="PANTHER" id="PTHR30098:SF2">
    <property type="entry name" value="LEUCYL_PHENYLALANYL-TRNA--PROTEIN TRANSFERASE"/>
    <property type="match status" value="1"/>
</dbReference>
<dbReference type="Pfam" id="PF03588">
    <property type="entry name" value="Leu_Phe_trans"/>
    <property type="match status" value="1"/>
</dbReference>
<dbReference type="SUPFAM" id="SSF55729">
    <property type="entry name" value="Acyl-CoA N-acyltransferases (Nat)"/>
    <property type="match status" value="1"/>
</dbReference>
<name>LFTR_ECOSE</name>